<dbReference type="EMBL" id="AF177395">
    <property type="protein sequence ID" value="AAF02675.1"/>
    <property type="molecule type" value="mRNA"/>
</dbReference>
<dbReference type="EMBL" id="AB033208">
    <property type="protein sequence ID" value="BAA85465.1"/>
    <property type="molecule type" value="mRNA"/>
</dbReference>
<dbReference type="EMBL" id="AY358414">
    <property type="protein sequence ID" value="AAQ88780.1"/>
    <property type="molecule type" value="mRNA"/>
</dbReference>
<dbReference type="EMBL" id="AK312695">
    <property type="protein sequence ID" value="BAG35574.1"/>
    <property type="molecule type" value="mRNA"/>
</dbReference>
<dbReference type="EMBL" id="CH471057">
    <property type="protein sequence ID" value="EAX06209.1"/>
    <property type="molecule type" value="Genomic_DNA"/>
</dbReference>
<dbReference type="EMBL" id="BC075077">
    <property type="protein sequence ID" value="AAH75077.1"/>
    <property type="molecule type" value="mRNA"/>
</dbReference>
<dbReference type="EMBL" id="BC075078">
    <property type="protein sequence ID" value="AAH75078.1"/>
    <property type="molecule type" value="mRNA"/>
</dbReference>
<dbReference type="EMBL" id="BC126328">
    <property type="protein sequence ID" value="AAI26329.1"/>
    <property type="molecule type" value="mRNA"/>
</dbReference>
<dbReference type="EMBL" id="BC126330">
    <property type="protein sequence ID" value="AAI26331.1"/>
    <property type="molecule type" value="mRNA"/>
</dbReference>
<dbReference type="EMBL" id="AB035181">
    <property type="protein sequence ID" value="BAA87056.1"/>
    <property type="molecule type" value="Genomic_DNA"/>
</dbReference>
<dbReference type="CCDS" id="CCDS3675.1"/>
<dbReference type="RefSeq" id="NP_055236.1">
    <property type="nucleotide sequence ID" value="NM_014421.3"/>
</dbReference>
<dbReference type="SMR" id="Q9UBU2"/>
<dbReference type="BioGRID" id="118014">
    <property type="interactions" value="50"/>
</dbReference>
<dbReference type="DIP" id="DIP-59408N"/>
<dbReference type="FunCoup" id="Q9UBU2">
    <property type="interactions" value="445"/>
</dbReference>
<dbReference type="IntAct" id="Q9UBU2">
    <property type="interactions" value="46"/>
</dbReference>
<dbReference type="STRING" id="9606.ENSP00000285311"/>
<dbReference type="GlyCosmos" id="Q9UBU2">
    <property type="glycosylation" value="1 site, No reported glycans"/>
</dbReference>
<dbReference type="GlyGen" id="Q9UBU2">
    <property type="glycosylation" value="1 site, 1 N-linked glycan (1 site)"/>
</dbReference>
<dbReference type="iPTMnet" id="Q9UBU2"/>
<dbReference type="PhosphoSitePlus" id="Q9UBU2"/>
<dbReference type="BioMuta" id="DKK2"/>
<dbReference type="DMDM" id="13124093"/>
<dbReference type="jPOST" id="Q9UBU2"/>
<dbReference type="MassIVE" id="Q9UBU2"/>
<dbReference type="PaxDb" id="9606-ENSP00000285311"/>
<dbReference type="PeptideAtlas" id="Q9UBU2"/>
<dbReference type="ProteomicsDB" id="84064"/>
<dbReference type="ABCD" id="Q9UBU2">
    <property type="antibodies" value="2 sequenced antibodies"/>
</dbReference>
<dbReference type="Antibodypedia" id="4050">
    <property type="antibodies" value="323 antibodies from 38 providers"/>
</dbReference>
<dbReference type="DNASU" id="27123"/>
<dbReference type="Ensembl" id="ENST00000285311.8">
    <property type="protein sequence ID" value="ENSP00000285311.3"/>
    <property type="gene ID" value="ENSG00000155011.9"/>
</dbReference>
<dbReference type="GeneID" id="27123"/>
<dbReference type="KEGG" id="hsa:27123"/>
<dbReference type="MANE-Select" id="ENST00000285311.8">
    <property type="protein sequence ID" value="ENSP00000285311.3"/>
    <property type="RefSeq nucleotide sequence ID" value="NM_014421.3"/>
    <property type="RefSeq protein sequence ID" value="NP_055236.1"/>
</dbReference>
<dbReference type="UCSC" id="uc003hyi.4">
    <property type="organism name" value="human"/>
</dbReference>
<dbReference type="AGR" id="HGNC:2892"/>
<dbReference type="CTD" id="27123"/>
<dbReference type="DisGeNET" id="27123"/>
<dbReference type="GeneCards" id="DKK2"/>
<dbReference type="HGNC" id="HGNC:2892">
    <property type="gene designation" value="DKK2"/>
</dbReference>
<dbReference type="HPA" id="ENSG00000155011">
    <property type="expression patterns" value="Tissue enhanced (cervix)"/>
</dbReference>
<dbReference type="MIM" id="605415">
    <property type="type" value="gene"/>
</dbReference>
<dbReference type="neXtProt" id="NX_Q9UBU2"/>
<dbReference type="OpenTargets" id="ENSG00000155011"/>
<dbReference type="PharmGKB" id="PA27346"/>
<dbReference type="VEuPathDB" id="HostDB:ENSG00000155011"/>
<dbReference type="eggNOG" id="KOG1218">
    <property type="taxonomic scope" value="Eukaryota"/>
</dbReference>
<dbReference type="GeneTree" id="ENSGT00940000162188"/>
<dbReference type="HOGENOM" id="CLU_080459_2_0_1"/>
<dbReference type="InParanoid" id="Q9UBU2"/>
<dbReference type="OMA" id="THAKGHE"/>
<dbReference type="OrthoDB" id="4321958at2759"/>
<dbReference type="PAN-GO" id="Q9UBU2">
    <property type="GO annotations" value="4 GO annotations based on evolutionary models"/>
</dbReference>
<dbReference type="PhylomeDB" id="Q9UBU2"/>
<dbReference type="TreeFam" id="TF330916"/>
<dbReference type="PathwayCommons" id="Q9UBU2"/>
<dbReference type="Reactome" id="R-HSA-201681">
    <property type="pathway name" value="TCF dependent signaling in response to WNT"/>
</dbReference>
<dbReference type="Reactome" id="R-HSA-3772470">
    <property type="pathway name" value="Negative regulation of TCF-dependent signaling by WNT ligand antagonists"/>
</dbReference>
<dbReference type="Reactome" id="R-HSA-5339717">
    <property type="pathway name" value="Signaling by LRP5 mutants"/>
</dbReference>
<dbReference type="SignaLink" id="Q9UBU2"/>
<dbReference type="BioGRID-ORCS" id="27123">
    <property type="hits" value="10 hits in 1150 CRISPR screens"/>
</dbReference>
<dbReference type="ChiTaRS" id="DKK2">
    <property type="organism name" value="human"/>
</dbReference>
<dbReference type="GeneWiki" id="DKK2"/>
<dbReference type="GenomeRNAi" id="27123"/>
<dbReference type="Pharos" id="Q9UBU2">
    <property type="development level" value="Tbio"/>
</dbReference>
<dbReference type="PRO" id="PR:Q9UBU2"/>
<dbReference type="Proteomes" id="UP000005640">
    <property type="component" value="Chromosome 4"/>
</dbReference>
<dbReference type="RNAct" id="Q9UBU2">
    <property type="molecule type" value="protein"/>
</dbReference>
<dbReference type="Bgee" id="ENSG00000155011">
    <property type="expression patterns" value="Expressed in upper leg skin and 124 other cell types or tissues"/>
</dbReference>
<dbReference type="ExpressionAtlas" id="Q9UBU2">
    <property type="expression patterns" value="baseline and differential"/>
</dbReference>
<dbReference type="GO" id="GO:0005615">
    <property type="term" value="C:extracellular space"/>
    <property type="evidence" value="ECO:0000314"/>
    <property type="project" value="BHF-UCL"/>
</dbReference>
<dbReference type="GO" id="GO:0039706">
    <property type="term" value="F:co-receptor binding"/>
    <property type="evidence" value="ECO:0000318"/>
    <property type="project" value="GO_Central"/>
</dbReference>
<dbReference type="GO" id="GO:0048019">
    <property type="term" value="F:receptor antagonist activity"/>
    <property type="evidence" value="ECO:0000318"/>
    <property type="project" value="GO_Central"/>
</dbReference>
<dbReference type="GO" id="GO:0090090">
    <property type="term" value="P:negative regulation of canonical Wnt signaling pathway"/>
    <property type="evidence" value="ECO:0000314"/>
    <property type="project" value="BHF-UCL"/>
</dbReference>
<dbReference type="GO" id="GO:0090263">
    <property type="term" value="P:positive regulation of canonical Wnt signaling pathway"/>
    <property type="evidence" value="ECO:0000314"/>
    <property type="project" value="BHF-UCL"/>
</dbReference>
<dbReference type="GO" id="GO:0016055">
    <property type="term" value="P:Wnt signaling pathway"/>
    <property type="evidence" value="ECO:0007669"/>
    <property type="project" value="UniProtKB-KW"/>
</dbReference>
<dbReference type="CDD" id="cd23015">
    <property type="entry name" value="Dkk2_Cys1"/>
    <property type="match status" value="1"/>
</dbReference>
<dbReference type="CDD" id="cd23273">
    <property type="entry name" value="Dkk2_Cys2"/>
    <property type="match status" value="1"/>
</dbReference>
<dbReference type="FunFam" id="2.10.80.10:FF:000001">
    <property type="entry name" value="Dickkopf WNT-signaling pathway inhibitor 2"/>
    <property type="match status" value="1"/>
</dbReference>
<dbReference type="Gene3D" id="2.10.80.10">
    <property type="entry name" value="Lipase, subunit A"/>
    <property type="match status" value="1"/>
</dbReference>
<dbReference type="InterPro" id="IPR006796">
    <property type="entry name" value="Dickkopf_N"/>
</dbReference>
<dbReference type="InterPro" id="IPR048500">
    <property type="entry name" value="DIKK1/2/4_C-subdom1"/>
</dbReference>
<dbReference type="InterPro" id="IPR048499">
    <property type="entry name" value="DIKK1/2/4_C-subdom2"/>
</dbReference>
<dbReference type="InterPro" id="IPR039863">
    <property type="entry name" value="DKK1-4"/>
</dbReference>
<dbReference type="InterPro" id="IPR047303">
    <property type="entry name" value="Dkk2_Cys1"/>
</dbReference>
<dbReference type="InterPro" id="IPR047302">
    <property type="entry name" value="Dkk2_Cys2"/>
</dbReference>
<dbReference type="PANTHER" id="PTHR12113:SF12">
    <property type="entry name" value="DICKKOPF-RELATED PROTEIN 2"/>
    <property type="match status" value="1"/>
</dbReference>
<dbReference type="PANTHER" id="PTHR12113">
    <property type="entry name" value="DICKKOPF3-LIKE 3"/>
    <property type="match status" value="1"/>
</dbReference>
<dbReference type="Pfam" id="PF04706">
    <property type="entry name" value="Dickkopf_N"/>
    <property type="match status" value="1"/>
</dbReference>
<dbReference type="Pfam" id="PF21481">
    <property type="entry name" value="DIKK1-2-4_C-subdom1"/>
    <property type="match status" value="1"/>
</dbReference>
<dbReference type="Pfam" id="PF21479">
    <property type="entry name" value="DIKK1-2-4_C-subdom2"/>
    <property type="match status" value="1"/>
</dbReference>
<accession>Q9UBU2</accession>
<accession>A0AVE9</accession>
<accession>B2R6S7</accession>
<accession>Q9UIU3</accession>
<comment type="function">
    <text evidence="1">Antagonizes canonical Wnt signaling by inhibiting LRP5/6 interaction with Wnt and by forming a ternary complex with the transmembrane protein KREMEN that promotes internalization of LRP5/6. DKKs play an important role in vertebrate development, where they locally inhibit Wnt regulated processes such as antero-posterior axial patterning, limb development, somitogenesis and eye formation. In the adult, Dkks are implicated in bone formation and bone disease, cancer and Alzheimer disease (By similarity).</text>
</comment>
<comment type="subunit">
    <text evidence="1">Interacts with LRP5 and LRP6.</text>
</comment>
<comment type="interaction">
    <interactant intactId="EBI-13274770">
        <id>Q9UBU2</id>
    </interactant>
    <interactant intactId="EBI-12012928">
        <id>P60371</id>
        <label>KRTAP10-6</label>
    </interactant>
    <organismsDiffer>false</organismsDiffer>
    <experiments>3</experiments>
</comment>
<comment type="interaction">
    <interactant intactId="EBI-13274770">
        <id>Q9UBU2</id>
    </interactant>
    <interactant intactId="EBI-910915">
        <id>O75581</id>
        <label>LRP6</label>
    </interactant>
    <organismsDiffer>false</organismsDiffer>
    <experiments>4</experiments>
</comment>
<comment type="subcellular location">
    <subcellularLocation>
        <location>Secreted</location>
    </subcellularLocation>
</comment>
<comment type="tissue specificity">
    <text>Expressed in heart, brain, skeletal muscle and lung.</text>
</comment>
<comment type="domain">
    <text evidence="1">The C-terminal cysteine-rich domain mediates interaction with LRP5 and LRP6.</text>
</comment>
<comment type="PTM">
    <text>May be proteolytically processed by a furin-like protease.</text>
</comment>
<comment type="similarity">
    <text evidence="4">Belongs to the dickkopf family.</text>
</comment>
<evidence type="ECO:0000250" key="1"/>
<evidence type="ECO:0000255" key="2"/>
<evidence type="ECO:0000269" key="3">
    <source>
    </source>
</evidence>
<evidence type="ECO:0000305" key="4"/>
<name>DKK2_HUMAN</name>
<reference key="1">
    <citation type="journal article" date="1999" name="Gene">
        <title>Functional and structural diversity of the human Dickkopf gene family.</title>
        <authorList>
            <person name="Krupnik V.E."/>
            <person name="Sharp J.D."/>
            <person name="Jiang C."/>
            <person name="Robison K."/>
            <person name="Chickering T.W."/>
            <person name="Amaravadi L."/>
            <person name="Brown D.E."/>
            <person name="Guyot D."/>
            <person name="Mays G."/>
            <person name="Leiby K."/>
            <person name="Chang B."/>
            <person name="Duong T."/>
            <person name="Goodearl A.D.J."/>
            <person name="Gearing D.P."/>
            <person name="Sokol S.Y."/>
            <person name="McCarthy S.A."/>
        </authorList>
    </citation>
    <scope>NUCLEOTIDE SEQUENCE [MRNA]</scope>
    <source>
        <tissue>Fetal lung</tissue>
    </source>
</reference>
<reference key="2">
    <citation type="submission" date="1999-10" db="EMBL/GenBank/DDBJ databases">
        <authorList>
            <person name="Tanaka S."/>
            <person name="Sugimachi K."/>
            <person name="Sugimachi K."/>
        </authorList>
    </citation>
    <scope>NUCLEOTIDE SEQUENCE [MRNA]</scope>
</reference>
<reference key="3">
    <citation type="journal article" date="2003" name="Genome Res.">
        <title>The secreted protein discovery initiative (SPDI), a large-scale effort to identify novel human secreted and transmembrane proteins: a bioinformatics assessment.</title>
        <authorList>
            <person name="Clark H.F."/>
            <person name="Gurney A.L."/>
            <person name="Abaya E."/>
            <person name="Baker K."/>
            <person name="Baldwin D.T."/>
            <person name="Brush J."/>
            <person name="Chen J."/>
            <person name="Chow B."/>
            <person name="Chui C."/>
            <person name="Crowley C."/>
            <person name="Currell B."/>
            <person name="Deuel B."/>
            <person name="Dowd P."/>
            <person name="Eaton D."/>
            <person name="Foster J.S."/>
            <person name="Grimaldi C."/>
            <person name="Gu Q."/>
            <person name="Hass P.E."/>
            <person name="Heldens S."/>
            <person name="Huang A."/>
            <person name="Kim H.S."/>
            <person name="Klimowski L."/>
            <person name="Jin Y."/>
            <person name="Johnson S."/>
            <person name="Lee J."/>
            <person name="Lewis L."/>
            <person name="Liao D."/>
            <person name="Mark M.R."/>
            <person name="Robbie E."/>
            <person name="Sanchez C."/>
            <person name="Schoenfeld J."/>
            <person name="Seshagiri S."/>
            <person name="Simmons L."/>
            <person name="Singh J."/>
            <person name="Smith V."/>
            <person name="Stinson J."/>
            <person name="Vagts A."/>
            <person name="Vandlen R.L."/>
            <person name="Watanabe C."/>
            <person name="Wieand D."/>
            <person name="Woods K."/>
            <person name="Xie M.-H."/>
            <person name="Yansura D.G."/>
            <person name="Yi S."/>
            <person name="Yu G."/>
            <person name="Yuan J."/>
            <person name="Zhang M."/>
            <person name="Zhang Z."/>
            <person name="Goddard A.D."/>
            <person name="Wood W.I."/>
            <person name="Godowski P.J."/>
            <person name="Gray A.M."/>
        </authorList>
    </citation>
    <scope>NUCLEOTIDE SEQUENCE [LARGE SCALE MRNA]</scope>
</reference>
<reference key="4">
    <citation type="journal article" date="2004" name="Nat. Genet.">
        <title>Complete sequencing and characterization of 21,243 full-length human cDNAs.</title>
        <authorList>
            <person name="Ota T."/>
            <person name="Suzuki Y."/>
            <person name="Nishikawa T."/>
            <person name="Otsuki T."/>
            <person name="Sugiyama T."/>
            <person name="Irie R."/>
            <person name="Wakamatsu A."/>
            <person name="Hayashi K."/>
            <person name="Sato H."/>
            <person name="Nagai K."/>
            <person name="Kimura K."/>
            <person name="Makita H."/>
            <person name="Sekine M."/>
            <person name="Obayashi M."/>
            <person name="Nishi T."/>
            <person name="Shibahara T."/>
            <person name="Tanaka T."/>
            <person name="Ishii S."/>
            <person name="Yamamoto J."/>
            <person name="Saito K."/>
            <person name="Kawai Y."/>
            <person name="Isono Y."/>
            <person name="Nakamura Y."/>
            <person name="Nagahari K."/>
            <person name="Murakami K."/>
            <person name="Yasuda T."/>
            <person name="Iwayanagi T."/>
            <person name="Wagatsuma M."/>
            <person name="Shiratori A."/>
            <person name="Sudo H."/>
            <person name="Hosoiri T."/>
            <person name="Kaku Y."/>
            <person name="Kodaira H."/>
            <person name="Kondo H."/>
            <person name="Sugawara M."/>
            <person name="Takahashi M."/>
            <person name="Kanda K."/>
            <person name="Yokoi T."/>
            <person name="Furuya T."/>
            <person name="Kikkawa E."/>
            <person name="Omura Y."/>
            <person name="Abe K."/>
            <person name="Kamihara K."/>
            <person name="Katsuta N."/>
            <person name="Sato K."/>
            <person name="Tanikawa M."/>
            <person name="Yamazaki M."/>
            <person name="Ninomiya K."/>
            <person name="Ishibashi T."/>
            <person name="Yamashita H."/>
            <person name="Murakawa K."/>
            <person name="Fujimori K."/>
            <person name="Tanai H."/>
            <person name="Kimata M."/>
            <person name="Watanabe M."/>
            <person name="Hiraoka S."/>
            <person name="Chiba Y."/>
            <person name="Ishida S."/>
            <person name="Ono Y."/>
            <person name="Takiguchi S."/>
            <person name="Watanabe S."/>
            <person name="Yosida M."/>
            <person name="Hotuta T."/>
            <person name="Kusano J."/>
            <person name="Kanehori K."/>
            <person name="Takahashi-Fujii A."/>
            <person name="Hara H."/>
            <person name="Tanase T.-O."/>
            <person name="Nomura Y."/>
            <person name="Togiya S."/>
            <person name="Komai F."/>
            <person name="Hara R."/>
            <person name="Takeuchi K."/>
            <person name="Arita M."/>
            <person name="Imose N."/>
            <person name="Musashino K."/>
            <person name="Yuuki H."/>
            <person name="Oshima A."/>
            <person name="Sasaki N."/>
            <person name="Aotsuka S."/>
            <person name="Yoshikawa Y."/>
            <person name="Matsunawa H."/>
            <person name="Ichihara T."/>
            <person name="Shiohata N."/>
            <person name="Sano S."/>
            <person name="Moriya S."/>
            <person name="Momiyama H."/>
            <person name="Satoh N."/>
            <person name="Takami S."/>
            <person name="Terashima Y."/>
            <person name="Suzuki O."/>
            <person name="Nakagawa S."/>
            <person name="Senoh A."/>
            <person name="Mizoguchi H."/>
            <person name="Goto Y."/>
            <person name="Shimizu F."/>
            <person name="Wakebe H."/>
            <person name="Hishigaki H."/>
            <person name="Watanabe T."/>
            <person name="Sugiyama A."/>
            <person name="Takemoto M."/>
            <person name="Kawakami B."/>
            <person name="Yamazaki M."/>
            <person name="Watanabe K."/>
            <person name="Kumagai A."/>
            <person name="Itakura S."/>
            <person name="Fukuzumi Y."/>
            <person name="Fujimori Y."/>
            <person name="Komiyama M."/>
            <person name="Tashiro H."/>
            <person name="Tanigami A."/>
            <person name="Fujiwara T."/>
            <person name="Ono T."/>
            <person name="Yamada K."/>
            <person name="Fujii Y."/>
            <person name="Ozaki K."/>
            <person name="Hirao M."/>
            <person name="Ohmori Y."/>
            <person name="Kawabata A."/>
            <person name="Hikiji T."/>
            <person name="Kobatake N."/>
            <person name="Inagaki H."/>
            <person name="Ikema Y."/>
            <person name="Okamoto S."/>
            <person name="Okitani R."/>
            <person name="Kawakami T."/>
            <person name="Noguchi S."/>
            <person name="Itoh T."/>
            <person name="Shigeta K."/>
            <person name="Senba T."/>
            <person name="Matsumura K."/>
            <person name="Nakajima Y."/>
            <person name="Mizuno T."/>
            <person name="Morinaga M."/>
            <person name="Sasaki M."/>
            <person name="Togashi T."/>
            <person name="Oyama M."/>
            <person name="Hata H."/>
            <person name="Watanabe M."/>
            <person name="Komatsu T."/>
            <person name="Mizushima-Sugano J."/>
            <person name="Satoh T."/>
            <person name="Shirai Y."/>
            <person name="Takahashi Y."/>
            <person name="Nakagawa K."/>
            <person name="Okumura K."/>
            <person name="Nagase T."/>
            <person name="Nomura N."/>
            <person name="Kikuchi H."/>
            <person name="Masuho Y."/>
            <person name="Yamashita R."/>
            <person name="Nakai K."/>
            <person name="Yada T."/>
            <person name="Nakamura Y."/>
            <person name="Ohara O."/>
            <person name="Isogai T."/>
            <person name="Sugano S."/>
        </authorList>
    </citation>
    <scope>NUCLEOTIDE SEQUENCE [LARGE SCALE MRNA]</scope>
</reference>
<reference key="5">
    <citation type="submission" date="2005-07" db="EMBL/GenBank/DDBJ databases">
        <authorList>
            <person name="Mural R.J."/>
            <person name="Istrail S."/>
            <person name="Sutton G.G."/>
            <person name="Florea L."/>
            <person name="Halpern A.L."/>
            <person name="Mobarry C.M."/>
            <person name="Lippert R."/>
            <person name="Walenz B."/>
            <person name="Shatkay H."/>
            <person name="Dew I."/>
            <person name="Miller J.R."/>
            <person name="Flanigan M.J."/>
            <person name="Edwards N.J."/>
            <person name="Bolanos R."/>
            <person name="Fasulo D."/>
            <person name="Halldorsson B.V."/>
            <person name="Hannenhalli S."/>
            <person name="Turner R."/>
            <person name="Yooseph S."/>
            <person name="Lu F."/>
            <person name="Nusskern D.R."/>
            <person name="Shue B.C."/>
            <person name="Zheng X.H."/>
            <person name="Zhong F."/>
            <person name="Delcher A.L."/>
            <person name="Huson D.H."/>
            <person name="Kravitz S.A."/>
            <person name="Mouchard L."/>
            <person name="Reinert K."/>
            <person name="Remington K.A."/>
            <person name="Clark A.G."/>
            <person name="Waterman M.S."/>
            <person name="Eichler E.E."/>
            <person name="Adams M.D."/>
            <person name="Hunkapiller M.W."/>
            <person name="Myers E.W."/>
            <person name="Venter J.C."/>
        </authorList>
    </citation>
    <scope>NUCLEOTIDE SEQUENCE [LARGE SCALE GENOMIC DNA]</scope>
</reference>
<reference key="6">
    <citation type="journal article" date="2004" name="Genome Res.">
        <title>The status, quality, and expansion of the NIH full-length cDNA project: the Mammalian Gene Collection (MGC).</title>
        <authorList>
            <consortium name="The MGC Project Team"/>
        </authorList>
    </citation>
    <scope>NUCLEOTIDE SEQUENCE [LARGE SCALE MRNA]</scope>
    <scope>VARIANT GLN-146</scope>
    <source>
        <tissue>Brain</tissue>
        <tissue>Testis</tissue>
    </source>
</reference>
<reference key="7">
    <citation type="submission" date="1999-11" db="EMBL/GenBank/DDBJ databases">
        <authorList>
            <person name="Tate G."/>
            <person name="Suzuki T."/>
            <person name="Mitsuya T."/>
        </authorList>
    </citation>
    <scope>NUCLEOTIDE SEQUENCE [GENOMIC DNA] OF 75-259</scope>
</reference>
<reference key="8">
    <citation type="journal article" date="2006" name="Oncogene">
        <title>Function and biological roles of the Dickkopf family of Wnt modulators.</title>
        <authorList>
            <person name="Niehrs C."/>
        </authorList>
    </citation>
    <scope>REVIEW OF THE DKK FAMILY</scope>
</reference>
<feature type="signal peptide" evidence="2">
    <location>
        <begin position="1"/>
        <end position="33"/>
    </location>
</feature>
<feature type="chain" id="PRO_0000007220" description="Dickkopf-related protein 2">
    <location>
        <begin position="34"/>
        <end position="259"/>
    </location>
</feature>
<feature type="region of interest" description="DKK-type Cys-1">
    <location>
        <begin position="78"/>
        <end position="127"/>
    </location>
</feature>
<feature type="region of interest" description="DKK-type Cys-2">
    <location>
        <begin position="183"/>
        <end position="256"/>
    </location>
</feature>
<feature type="glycosylation site" description="N-linked (GlcNAc...) asparagine" evidence="2">
    <location>
        <position position="52"/>
    </location>
</feature>
<feature type="disulfide bond" evidence="1">
    <location>
        <begin position="183"/>
        <end position="195"/>
    </location>
</feature>
<feature type="disulfide bond" evidence="1">
    <location>
        <begin position="189"/>
        <end position="204"/>
    </location>
</feature>
<feature type="disulfide bond" evidence="1">
    <location>
        <begin position="194"/>
        <end position="231"/>
    </location>
</feature>
<feature type="disulfide bond" evidence="1">
    <location>
        <begin position="214"/>
        <end position="239"/>
    </location>
</feature>
<feature type="disulfide bond" evidence="1">
    <location>
        <begin position="233"/>
        <end position="256"/>
    </location>
</feature>
<feature type="sequence variant" id="VAR_021966" description="In dbSNP:rs17037102." evidence="3">
    <original>R</original>
    <variation>Q</variation>
    <location>
        <position position="146"/>
    </location>
</feature>
<keyword id="KW-0217">Developmental protein</keyword>
<keyword id="KW-1015">Disulfide bond</keyword>
<keyword id="KW-0325">Glycoprotein</keyword>
<keyword id="KW-1267">Proteomics identification</keyword>
<keyword id="KW-1185">Reference proteome</keyword>
<keyword id="KW-0964">Secreted</keyword>
<keyword id="KW-0732">Signal</keyword>
<keyword id="KW-0879">Wnt signaling pathway</keyword>
<protein>
    <recommendedName>
        <fullName>Dickkopf-related protein 2</fullName>
        <shortName>Dickkopf-2</shortName>
        <shortName>Dkk-2</shortName>
        <shortName>hDkk-2</shortName>
    </recommendedName>
</protein>
<gene>
    <name type="primary">DKK2</name>
    <name type="ORF">UNQ682/PRO1316</name>
</gene>
<organism>
    <name type="scientific">Homo sapiens</name>
    <name type="common">Human</name>
    <dbReference type="NCBI Taxonomy" id="9606"/>
    <lineage>
        <taxon>Eukaryota</taxon>
        <taxon>Metazoa</taxon>
        <taxon>Chordata</taxon>
        <taxon>Craniata</taxon>
        <taxon>Vertebrata</taxon>
        <taxon>Euteleostomi</taxon>
        <taxon>Mammalia</taxon>
        <taxon>Eutheria</taxon>
        <taxon>Euarchontoglires</taxon>
        <taxon>Primates</taxon>
        <taxon>Haplorrhini</taxon>
        <taxon>Catarrhini</taxon>
        <taxon>Hominidae</taxon>
        <taxon>Homo</taxon>
    </lineage>
</organism>
<proteinExistence type="evidence at protein level"/>
<sequence>MAALMRSKDSSCCLLLLAAVLMVESSQIGSSRAKLNSIKSSLGGETPGQAANRSAGMYQGLAFGGSKKGKNLGQAYPCSSDKECEVGRYCHSPHQGSSACMVCRRKKKRCHRDGMCCPSTRCNNGICIPVTESILTPHIPALDGTRHRDRNHGHYSNHDLGWQNLGRPHTKMSHIKGHEGDPCLRSSDCIEGFCCARHFWTKICKPVLHQGEVCTKQRKKGSHGLEIFQRCDCAKGLSCKVWKDATYSSKARLHVCQKI</sequence>